<evidence type="ECO:0000250" key="1"/>
<evidence type="ECO:0000255" key="2"/>
<evidence type="ECO:0000305" key="3"/>
<protein>
    <recommendedName>
        <fullName>Metal tolerance protein 10</fullName>
        <shortName>AtMTP10</shortName>
    </recommendedName>
</protein>
<reference key="1">
    <citation type="journal article" date="2000" name="Nature">
        <title>Sequence and analysis of chromosome 1 of the plant Arabidopsis thaliana.</title>
        <authorList>
            <person name="Theologis A."/>
            <person name="Ecker J.R."/>
            <person name="Palm C.J."/>
            <person name="Federspiel N.A."/>
            <person name="Kaul S."/>
            <person name="White O."/>
            <person name="Alonso J."/>
            <person name="Altafi H."/>
            <person name="Araujo R."/>
            <person name="Bowman C.L."/>
            <person name="Brooks S.Y."/>
            <person name="Buehler E."/>
            <person name="Chan A."/>
            <person name="Chao Q."/>
            <person name="Chen H."/>
            <person name="Cheuk R.F."/>
            <person name="Chin C.W."/>
            <person name="Chung M.K."/>
            <person name="Conn L."/>
            <person name="Conway A.B."/>
            <person name="Conway A.R."/>
            <person name="Creasy T.H."/>
            <person name="Dewar K."/>
            <person name="Dunn P."/>
            <person name="Etgu P."/>
            <person name="Feldblyum T.V."/>
            <person name="Feng J.-D."/>
            <person name="Fong B."/>
            <person name="Fujii C.Y."/>
            <person name="Gill J.E."/>
            <person name="Goldsmith A.D."/>
            <person name="Haas B."/>
            <person name="Hansen N.F."/>
            <person name="Hughes B."/>
            <person name="Huizar L."/>
            <person name="Hunter J.L."/>
            <person name="Jenkins J."/>
            <person name="Johnson-Hopson C."/>
            <person name="Khan S."/>
            <person name="Khaykin E."/>
            <person name="Kim C.J."/>
            <person name="Koo H.L."/>
            <person name="Kremenetskaia I."/>
            <person name="Kurtz D.B."/>
            <person name="Kwan A."/>
            <person name="Lam B."/>
            <person name="Langin-Hooper S."/>
            <person name="Lee A."/>
            <person name="Lee J.M."/>
            <person name="Lenz C.A."/>
            <person name="Li J.H."/>
            <person name="Li Y.-P."/>
            <person name="Lin X."/>
            <person name="Liu S.X."/>
            <person name="Liu Z.A."/>
            <person name="Luros J.S."/>
            <person name="Maiti R."/>
            <person name="Marziali A."/>
            <person name="Militscher J."/>
            <person name="Miranda M."/>
            <person name="Nguyen M."/>
            <person name="Nierman W.C."/>
            <person name="Osborne B.I."/>
            <person name="Pai G."/>
            <person name="Peterson J."/>
            <person name="Pham P.K."/>
            <person name="Rizzo M."/>
            <person name="Rooney T."/>
            <person name="Rowley D."/>
            <person name="Sakano H."/>
            <person name="Salzberg S.L."/>
            <person name="Schwartz J.R."/>
            <person name="Shinn P."/>
            <person name="Southwick A.M."/>
            <person name="Sun H."/>
            <person name="Tallon L.J."/>
            <person name="Tambunga G."/>
            <person name="Toriumi M.J."/>
            <person name="Town C.D."/>
            <person name="Utterback T."/>
            <person name="Van Aken S."/>
            <person name="Vaysberg M."/>
            <person name="Vysotskaia V.S."/>
            <person name="Walker M."/>
            <person name="Wu D."/>
            <person name="Yu G."/>
            <person name="Fraser C.M."/>
            <person name="Venter J.C."/>
            <person name="Davis R.W."/>
        </authorList>
    </citation>
    <scope>NUCLEOTIDE SEQUENCE [LARGE SCALE GENOMIC DNA]</scope>
    <source>
        <strain>cv. Columbia</strain>
    </source>
</reference>
<reference key="2">
    <citation type="journal article" date="2017" name="Plant J.">
        <title>Araport11: a complete reannotation of the Arabidopsis thaliana reference genome.</title>
        <authorList>
            <person name="Cheng C.Y."/>
            <person name="Krishnakumar V."/>
            <person name="Chan A.P."/>
            <person name="Thibaud-Nissen F."/>
            <person name="Schobel S."/>
            <person name="Town C.D."/>
        </authorList>
    </citation>
    <scope>GENOME REANNOTATION</scope>
    <source>
        <strain>cv. Columbia</strain>
    </source>
</reference>
<reference key="3">
    <citation type="submission" date="2006-07" db="EMBL/GenBank/DDBJ databases">
        <title>Large-scale analysis of RIKEN Arabidopsis full-length (RAFL) cDNAs.</title>
        <authorList>
            <person name="Totoki Y."/>
            <person name="Seki M."/>
            <person name="Ishida J."/>
            <person name="Nakajima M."/>
            <person name="Enju A."/>
            <person name="Kamiya A."/>
            <person name="Narusaka M."/>
            <person name="Shin-i T."/>
            <person name="Nakagawa M."/>
            <person name="Sakamoto N."/>
            <person name="Oishi K."/>
            <person name="Kohara Y."/>
            <person name="Kobayashi M."/>
            <person name="Toyoda A."/>
            <person name="Sakaki Y."/>
            <person name="Sakurai T."/>
            <person name="Iida K."/>
            <person name="Akiyama K."/>
            <person name="Satou M."/>
            <person name="Toyoda T."/>
            <person name="Konagaya A."/>
            <person name="Carninci P."/>
            <person name="Kawai J."/>
            <person name="Hayashizaki Y."/>
            <person name="Shinozaki K."/>
        </authorList>
    </citation>
    <scope>NUCLEOTIDE SEQUENCE [LARGE SCALE MRNA]</scope>
    <source>
        <strain>cv. Columbia</strain>
    </source>
</reference>
<reference key="4">
    <citation type="journal article" date="2003" name="Science">
        <title>Empirical analysis of transcriptional activity in the Arabidopsis genome.</title>
        <authorList>
            <person name="Yamada K."/>
            <person name="Lim J."/>
            <person name="Dale J.M."/>
            <person name="Chen H."/>
            <person name="Shinn P."/>
            <person name="Palm C.J."/>
            <person name="Southwick A.M."/>
            <person name="Wu H.C."/>
            <person name="Kim C.J."/>
            <person name="Nguyen M."/>
            <person name="Pham P.K."/>
            <person name="Cheuk R.F."/>
            <person name="Karlin-Newmann G."/>
            <person name="Liu S.X."/>
            <person name="Lam B."/>
            <person name="Sakano H."/>
            <person name="Wu T."/>
            <person name="Yu G."/>
            <person name="Miranda M."/>
            <person name="Quach H.L."/>
            <person name="Tripp M."/>
            <person name="Chang C.H."/>
            <person name="Lee J.M."/>
            <person name="Toriumi M.J."/>
            <person name="Chan M.M."/>
            <person name="Tang C.C."/>
            <person name="Onodera C.S."/>
            <person name="Deng J.M."/>
            <person name="Akiyama K."/>
            <person name="Ansari Y."/>
            <person name="Arakawa T."/>
            <person name="Banh J."/>
            <person name="Banno F."/>
            <person name="Bowser L."/>
            <person name="Brooks S.Y."/>
            <person name="Carninci P."/>
            <person name="Chao Q."/>
            <person name="Choy N."/>
            <person name="Enju A."/>
            <person name="Goldsmith A.D."/>
            <person name="Gurjal M."/>
            <person name="Hansen N.F."/>
            <person name="Hayashizaki Y."/>
            <person name="Johnson-Hopson C."/>
            <person name="Hsuan V.W."/>
            <person name="Iida K."/>
            <person name="Karnes M."/>
            <person name="Khan S."/>
            <person name="Koesema E."/>
            <person name="Ishida J."/>
            <person name="Jiang P.X."/>
            <person name="Jones T."/>
            <person name="Kawai J."/>
            <person name="Kamiya A."/>
            <person name="Meyers C."/>
            <person name="Nakajima M."/>
            <person name="Narusaka M."/>
            <person name="Seki M."/>
            <person name="Sakurai T."/>
            <person name="Satou M."/>
            <person name="Tamse R."/>
            <person name="Vaysberg M."/>
            <person name="Wallender E.K."/>
            <person name="Wong C."/>
            <person name="Yamamura Y."/>
            <person name="Yuan S."/>
            <person name="Shinozaki K."/>
            <person name="Davis R.W."/>
            <person name="Theologis A."/>
            <person name="Ecker J.R."/>
        </authorList>
    </citation>
    <scope>NUCLEOTIDE SEQUENCE [LARGE SCALE MRNA] OF 12-428</scope>
    <source>
        <strain>cv. Columbia</strain>
    </source>
</reference>
<keyword id="KW-0406">Ion transport</keyword>
<keyword id="KW-0472">Membrane</keyword>
<keyword id="KW-1185">Reference proteome</keyword>
<keyword id="KW-0812">Transmembrane</keyword>
<keyword id="KW-1133">Transmembrane helix</keyword>
<keyword id="KW-0813">Transport</keyword>
<keyword id="KW-0926">Vacuole</keyword>
<gene>
    <name type="primary">MTP10</name>
    <name type="ordered locus">At1g16310</name>
    <name type="ORF">F3O9.11</name>
</gene>
<accession>Q0WU02</accession>
<accession>Q9SA30</accession>
<proteinExistence type="evidence at transcript level"/>
<organism>
    <name type="scientific">Arabidopsis thaliana</name>
    <name type="common">Mouse-ear cress</name>
    <dbReference type="NCBI Taxonomy" id="3702"/>
    <lineage>
        <taxon>Eukaryota</taxon>
        <taxon>Viridiplantae</taxon>
        <taxon>Streptophyta</taxon>
        <taxon>Embryophyta</taxon>
        <taxon>Tracheophyta</taxon>
        <taxon>Spermatophyta</taxon>
        <taxon>Magnoliopsida</taxon>
        <taxon>eudicotyledons</taxon>
        <taxon>Gunneridae</taxon>
        <taxon>Pentapetalae</taxon>
        <taxon>rosids</taxon>
        <taxon>malvids</taxon>
        <taxon>Brassicales</taxon>
        <taxon>Brassicaceae</taxon>
        <taxon>Camelineae</taxon>
        <taxon>Arabidopsis</taxon>
    </lineage>
</organism>
<dbReference type="EMBL" id="AC006341">
    <property type="protein sequence ID" value="AAD34683.1"/>
    <property type="status" value="ALT_INIT"/>
    <property type="molecule type" value="Genomic_DNA"/>
</dbReference>
<dbReference type="EMBL" id="CP002684">
    <property type="protein sequence ID" value="AEE29434.1"/>
    <property type="molecule type" value="Genomic_DNA"/>
</dbReference>
<dbReference type="EMBL" id="AK227391">
    <property type="protein sequence ID" value="BAE99396.1"/>
    <property type="molecule type" value="mRNA"/>
</dbReference>
<dbReference type="EMBL" id="AY065410">
    <property type="protein sequence ID" value="AAL38851.1"/>
    <property type="status" value="ALT_INIT"/>
    <property type="molecule type" value="mRNA"/>
</dbReference>
<dbReference type="PIR" id="B86298">
    <property type="entry name" value="B86298"/>
</dbReference>
<dbReference type="RefSeq" id="NP_173081.2">
    <property type="nucleotide sequence ID" value="NM_101497.4"/>
</dbReference>
<dbReference type="SMR" id="Q0WU02"/>
<dbReference type="FunCoup" id="Q0WU02">
    <property type="interactions" value="25"/>
</dbReference>
<dbReference type="STRING" id="3702.Q0WU02"/>
<dbReference type="PaxDb" id="3702-AT1G16310.1"/>
<dbReference type="ProteomicsDB" id="250980"/>
<dbReference type="EnsemblPlants" id="AT1G16310.1">
    <property type="protein sequence ID" value="AT1G16310.1"/>
    <property type="gene ID" value="AT1G16310"/>
</dbReference>
<dbReference type="GeneID" id="838200"/>
<dbReference type="Gramene" id="AT1G16310.1">
    <property type="protein sequence ID" value="AT1G16310.1"/>
    <property type="gene ID" value="AT1G16310"/>
</dbReference>
<dbReference type="KEGG" id="ath:AT1G16310"/>
<dbReference type="Araport" id="AT1G16310"/>
<dbReference type="TAIR" id="AT1G16310"/>
<dbReference type="eggNOG" id="KOG1485">
    <property type="taxonomic scope" value="Eukaryota"/>
</dbReference>
<dbReference type="HOGENOM" id="CLU_013430_2_3_1"/>
<dbReference type="InParanoid" id="Q0WU02"/>
<dbReference type="PhylomeDB" id="Q0WU02"/>
<dbReference type="PRO" id="PR:Q0WU02"/>
<dbReference type="Proteomes" id="UP000006548">
    <property type="component" value="Chromosome 1"/>
</dbReference>
<dbReference type="ExpressionAtlas" id="Q0WU02">
    <property type="expression patterns" value="baseline and differential"/>
</dbReference>
<dbReference type="GO" id="GO:0005774">
    <property type="term" value="C:vacuolar membrane"/>
    <property type="evidence" value="ECO:0007669"/>
    <property type="project" value="UniProtKB-SubCell"/>
</dbReference>
<dbReference type="GO" id="GO:0008324">
    <property type="term" value="F:monoatomic cation transmembrane transporter activity"/>
    <property type="evidence" value="ECO:0007669"/>
    <property type="project" value="InterPro"/>
</dbReference>
<dbReference type="GO" id="GO:0009787">
    <property type="term" value="P:regulation of abscisic acid-activated signaling pathway"/>
    <property type="evidence" value="ECO:0000315"/>
    <property type="project" value="TAIR"/>
</dbReference>
<dbReference type="GO" id="GO:2000022">
    <property type="term" value="P:regulation of jasmonic acid mediated signaling pathway"/>
    <property type="evidence" value="ECO:0000315"/>
    <property type="project" value="TAIR"/>
</dbReference>
<dbReference type="GO" id="GO:2000031">
    <property type="term" value="P:regulation of salicylic acid mediated signaling pathway"/>
    <property type="evidence" value="ECO:0000315"/>
    <property type="project" value="TAIR"/>
</dbReference>
<dbReference type="FunFam" id="1.20.1510.10:FF:000003">
    <property type="entry name" value="Metal tolerance protein 11"/>
    <property type="match status" value="1"/>
</dbReference>
<dbReference type="FunFam" id="3.30.70.1350:FF:000001">
    <property type="entry name" value="Metal tolerance protein 11"/>
    <property type="match status" value="1"/>
</dbReference>
<dbReference type="Gene3D" id="1.20.1510.10">
    <property type="entry name" value="Cation efflux protein transmembrane domain"/>
    <property type="match status" value="1"/>
</dbReference>
<dbReference type="Gene3D" id="3.30.70.1350">
    <property type="entry name" value="Cation efflux protein, cytoplasmic domain"/>
    <property type="match status" value="1"/>
</dbReference>
<dbReference type="InterPro" id="IPR002524">
    <property type="entry name" value="Cation_efflux"/>
</dbReference>
<dbReference type="InterPro" id="IPR027470">
    <property type="entry name" value="Cation_efflux_CTD"/>
</dbReference>
<dbReference type="InterPro" id="IPR036837">
    <property type="entry name" value="Cation_efflux_CTD_sf"/>
</dbReference>
<dbReference type="InterPro" id="IPR027469">
    <property type="entry name" value="Cation_efflux_TMD_sf"/>
</dbReference>
<dbReference type="InterPro" id="IPR050291">
    <property type="entry name" value="CDF_Transporter"/>
</dbReference>
<dbReference type="NCBIfam" id="TIGR01297">
    <property type="entry name" value="CDF"/>
    <property type="match status" value="1"/>
</dbReference>
<dbReference type="PANTHER" id="PTHR43840:SF35">
    <property type="entry name" value="METAL TOLERANCE PROTEIN 10"/>
    <property type="match status" value="1"/>
</dbReference>
<dbReference type="PANTHER" id="PTHR43840">
    <property type="entry name" value="MITOCHONDRIAL METAL TRANSPORTER 1-RELATED"/>
    <property type="match status" value="1"/>
</dbReference>
<dbReference type="Pfam" id="PF01545">
    <property type="entry name" value="Cation_efflux"/>
    <property type="match status" value="1"/>
</dbReference>
<dbReference type="Pfam" id="PF16916">
    <property type="entry name" value="ZT_dimer"/>
    <property type="match status" value="1"/>
</dbReference>
<dbReference type="SUPFAM" id="SSF160240">
    <property type="entry name" value="Cation efflux protein cytoplasmic domain-like"/>
    <property type="match status" value="1"/>
</dbReference>
<dbReference type="SUPFAM" id="SSF161111">
    <property type="entry name" value="Cation efflux protein transmembrane domain-like"/>
    <property type="match status" value="1"/>
</dbReference>
<name>MTP10_ARATH</name>
<feature type="chain" id="PRO_0000400006" description="Metal tolerance protein 10">
    <location>
        <begin position="1"/>
        <end position="428"/>
    </location>
</feature>
<feature type="topological domain" description="Cytoplasmic" evidence="2">
    <location>
        <begin position="1"/>
        <end position="140"/>
    </location>
</feature>
<feature type="transmembrane region" description="Helical" evidence="2">
    <location>
        <begin position="141"/>
        <end position="161"/>
    </location>
</feature>
<feature type="topological domain" description="Vacuolar" evidence="2">
    <location>
        <begin position="162"/>
        <end position="167"/>
    </location>
</feature>
<feature type="transmembrane region" description="Helical" evidence="2">
    <location>
        <begin position="168"/>
        <end position="188"/>
    </location>
</feature>
<feature type="topological domain" description="Cytoplasmic" evidence="2">
    <location>
        <begin position="189"/>
        <end position="209"/>
    </location>
</feature>
<feature type="transmembrane region" description="Helical" evidence="2">
    <location>
        <begin position="210"/>
        <end position="230"/>
    </location>
</feature>
<feature type="topological domain" description="Vacuolar" evidence="2">
    <location>
        <begin position="231"/>
        <end position="248"/>
    </location>
</feature>
<feature type="transmembrane region" description="Helical" evidence="2">
    <location>
        <begin position="249"/>
        <end position="269"/>
    </location>
</feature>
<feature type="topological domain" description="Cytoplasmic" evidence="2">
    <location>
        <begin position="270"/>
        <end position="287"/>
    </location>
</feature>
<feature type="transmembrane region" description="Helical" evidence="2">
    <location>
        <begin position="288"/>
        <end position="308"/>
    </location>
</feature>
<feature type="topological domain" description="Vacuolar" evidence="2">
    <location>
        <begin position="309"/>
        <end position="311"/>
    </location>
</feature>
<feature type="transmembrane region" description="Helical" evidence="2">
    <location>
        <begin position="312"/>
        <end position="332"/>
    </location>
</feature>
<feature type="topological domain" description="Cytoplasmic" evidence="2">
    <location>
        <begin position="333"/>
        <end position="428"/>
    </location>
</feature>
<sequence>MPLNSYIFFLFLTTSPRNTFFGIRTHSDRIMATEHITRTGDEYNVELLPSDDDAPPLESSWRLNLDAFQLPSSTGGRHDGRTRFSRYFRTPRKERRVSEYYKKQERLLEGFNEMETIHENGFASGVPTEEEMKKLAKSERLAVHISNATNLVLFVAKVYASMESRSMAVIASTLDSLLDLLSGFILWFTANAMRKPNQFHYPIGKRRMQPVGIIVFASVMATLGLQVLLESGRQLVAKSGIHMNSTEEKWMIGIMVSVTIVKFLLMLYCRGFQNEIVRAYAQDHLFDVVTNSIGLATAVLAVKFYWWIDPTGAILIALYTIATWARTVLENVHSLIGRSAPPDFLAKLTFLIWNHHEQIKHIDTVRAYTFGSHYFVEVDIVLPEDMRLQEAHNIGETLQEKLEQLAEVERAFVHIDFEFTHRPEHKCN</sequence>
<comment type="function">
    <text evidence="1">Involved in sequestration of excess metal in the cytoplasm into vacuoles to maintain metal homeostasis.</text>
</comment>
<comment type="subcellular location">
    <subcellularLocation>
        <location evidence="1">Vacuole membrane</location>
        <topology evidence="1">Multi-pass membrane protein</topology>
    </subcellularLocation>
    <text>Tonoplast.</text>
</comment>
<comment type="similarity">
    <text evidence="3">Belongs to the cation diffusion facilitator (CDF) transporter (TC 2.A.4) family. SLC30A subfamily.</text>
</comment>
<comment type="sequence caution" evidence="3">
    <conflict type="erroneous initiation">
        <sequence resource="EMBL-CDS" id="AAD34683"/>
    </conflict>
    <text>Truncated N-terminus.</text>
</comment>
<comment type="sequence caution" evidence="3">
    <conflict type="erroneous initiation">
        <sequence resource="EMBL-CDS" id="AAL38851"/>
    </conflict>
    <text>Truncated N-terminus.</text>
</comment>